<reference key="1">
    <citation type="journal article" date="2003" name="Nat. Genet.">
        <title>Comparative analysis of the genome sequences of Bordetella pertussis, Bordetella parapertussis and Bordetella bronchiseptica.</title>
        <authorList>
            <person name="Parkhill J."/>
            <person name="Sebaihia M."/>
            <person name="Preston A."/>
            <person name="Murphy L.D."/>
            <person name="Thomson N.R."/>
            <person name="Harris D.E."/>
            <person name="Holden M.T.G."/>
            <person name="Churcher C.M."/>
            <person name="Bentley S.D."/>
            <person name="Mungall K.L."/>
            <person name="Cerdeno-Tarraga A.-M."/>
            <person name="Temple L."/>
            <person name="James K.D."/>
            <person name="Harris B."/>
            <person name="Quail M.A."/>
            <person name="Achtman M."/>
            <person name="Atkin R."/>
            <person name="Baker S."/>
            <person name="Basham D."/>
            <person name="Bason N."/>
            <person name="Cherevach I."/>
            <person name="Chillingworth T."/>
            <person name="Collins M."/>
            <person name="Cronin A."/>
            <person name="Davis P."/>
            <person name="Doggett J."/>
            <person name="Feltwell T."/>
            <person name="Goble A."/>
            <person name="Hamlin N."/>
            <person name="Hauser H."/>
            <person name="Holroyd S."/>
            <person name="Jagels K."/>
            <person name="Leather S."/>
            <person name="Moule S."/>
            <person name="Norberczak H."/>
            <person name="O'Neil S."/>
            <person name="Ormond D."/>
            <person name="Price C."/>
            <person name="Rabbinowitsch E."/>
            <person name="Rutter S."/>
            <person name="Sanders M."/>
            <person name="Saunders D."/>
            <person name="Seeger K."/>
            <person name="Sharp S."/>
            <person name="Simmonds M."/>
            <person name="Skelton J."/>
            <person name="Squares R."/>
            <person name="Squares S."/>
            <person name="Stevens K."/>
            <person name="Unwin L."/>
            <person name="Whitehead S."/>
            <person name="Barrell B.G."/>
            <person name="Maskell D.J."/>
        </authorList>
    </citation>
    <scope>NUCLEOTIDE SEQUENCE [LARGE SCALE GENOMIC DNA]</scope>
    <source>
        <strain>12822 / ATCC BAA-587 / NCTC 13253</strain>
    </source>
</reference>
<proteinExistence type="inferred from homology"/>
<protein>
    <recommendedName>
        <fullName evidence="1">Urease accessory protein UreF</fullName>
    </recommendedName>
</protein>
<evidence type="ECO:0000255" key="1">
    <source>
        <dbReference type="HAMAP-Rule" id="MF_01385"/>
    </source>
</evidence>
<feature type="chain" id="PRO_0000344079" description="Urease accessory protein UreF">
    <location>
        <begin position="1"/>
        <end position="220"/>
    </location>
</feature>
<comment type="function">
    <text evidence="1">Required for maturation of urease via the functional incorporation of the urease nickel metallocenter.</text>
</comment>
<comment type="subunit">
    <text evidence="1">UreD, UreF and UreG form a complex that acts as a GTP-hydrolysis-dependent molecular chaperone, activating the urease apoprotein by helping to assemble the nickel containing metallocenter of UreC. The UreE protein probably delivers the nickel.</text>
</comment>
<comment type="subcellular location">
    <subcellularLocation>
        <location evidence="1">Cytoplasm</location>
    </subcellularLocation>
</comment>
<comment type="similarity">
    <text evidence="1">Belongs to the UreF family.</text>
</comment>
<sequence length="220" mass="23856">MHLSSPALPIGGFSYSQGLEAAIELGLVHDEASTLAWIESQLVTVMARAEAPLWCLLFEAWRAGDDAAAHGWNQWFHASRETRELRQETEQMGRSLARLAQELGWGTAATRAAVAALRPATLPAVHACACAMWALPREAGLGAYVFSWLENQVAAAIKGVPLGQMAGQRMLERLRAGLPAVLADARARAGATPPRLDTFAPQYALVSARHETQFSRLFRS</sequence>
<keyword id="KW-0143">Chaperone</keyword>
<keyword id="KW-0963">Cytoplasm</keyword>
<keyword id="KW-0996">Nickel insertion</keyword>
<name>UREF_BORPA</name>
<gene>
    <name evidence="1" type="primary">ureF</name>
    <name type="ordered locus">BPP3853</name>
</gene>
<accession>Q7W419</accession>
<organism>
    <name type="scientific">Bordetella parapertussis (strain 12822 / ATCC BAA-587 / NCTC 13253)</name>
    <dbReference type="NCBI Taxonomy" id="257311"/>
    <lineage>
        <taxon>Bacteria</taxon>
        <taxon>Pseudomonadati</taxon>
        <taxon>Pseudomonadota</taxon>
        <taxon>Betaproteobacteria</taxon>
        <taxon>Burkholderiales</taxon>
        <taxon>Alcaligenaceae</taxon>
        <taxon>Bordetella</taxon>
    </lineage>
</organism>
<dbReference type="EMBL" id="BX640435">
    <property type="protein sequence ID" value="CAE39136.1"/>
    <property type="molecule type" value="Genomic_DNA"/>
</dbReference>
<dbReference type="SMR" id="Q7W419"/>
<dbReference type="KEGG" id="bpa:BPP3853"/>
<dbReference type="HOGENOM" id="CLU_049215_2_1_4"/>
<dbReference type="Proteomes" id="UP000001421">
    <property type="component" value="Chromosome"/>
</dbReference>
<dbReference type="GO" id="GO:0005737">
    <property type="term" value="C:cytoplasm"/>
    <property type="evidence" value="ECO:0007669"/>
    <property type="project" value="UniProtKB-SubCell"/>
</dbReference>
<dbReference type="GO" id="GO:0016151">
    <property type="term" value="F:nickel cation binding"/>
    <property type="evidence" value="ECO:0007669"/>
    <property type="project" value="UniProtKB-UniRule"/>
</dbReference>
<dbReference type="Gene3D" id="1.10.4190.10">
    <property type="entry name" value="Urease accessory protein UreF"/>
    <property type="match status" value="1"/>
</dbReference>
<dbReference type="HAMAP" id="MF_01385">
    <property type="entry name" value="UreF"/>
    <property type="match status" value="1"/>
</dbReference>
<dbReference type="InterPro" id="IPR002639">
    <property type="entry name" value="UreF"/>
</dbReference>
<dbReference type="InterPro" id="IPR038277">
    <property type="entry name" value="UreF_sf"/>
</dbReference>
<dbReference type="PANTHER" id="PTHR33620">
    <property type="entry name" value="UREASE ACCESSORY PROTEIN F"/>
    <property type="match status" value="1"/>
</dbReference>
<dbReference type="PANTHER" id="PTHR33620:SF1">
    <property type="entry name" value="UREASE ACCESSORY PROTEIN F"/>
    <property type="match status" value="1"/>
</dbReference>
<dbReference type="Pfam" id="PF01730">
    <property type="entry name" value="UreF"/>
    <property type="match status" value="1"/>
</dbReference>
<dbReference type="PIRSF" id="PIRSF009467">
    <property type="entry name" value="Ureas_acces_UreF"/>
    <property type="match status" value="1"/>
</dbReference>